<feature type="chain" id="PRO_0000267155" description="UPF0398 protein BT9727_1438">
    <location>
        <begin position="1"/>
        <end position="184"/>
    </location>
</feature>
<comment type="similarity">
    <text evidence="1">Belongs to the UPF0398 family.</text>
</comment>
<organism>
    <name type="scientific">Bacillus thuringiensis subsp. konkukian (strain 97-27)</name>
    <dbReference type="NCBI Taxonomy" id="281309"/>
    <lineage>
        <taxon>Bacteria</taxon>
        <taxon>Bacillati</taxon>
        <taxon>Bacillota</taxon>
        <taxon>Bacilli</taxon>
        <taxon>Bacillales</taxon>
        <taxon>Bacillaceae</taxon>
        <taxon>Bacillus</taxon>
        <taxon>Bacillus cereus group</taxon>
    </lineage>
</organism>
<proteinExistence type="inferred from homology"/>
<evidence type="ECO:0000255" key="1">
    <source>
        <dbReference type="HAMAP-Rule" id="MF_01575"/>
    </source>
</evidence>
<dbReference type="EMBL" id="AE017355">
    <property type="protein sequence ID" value="AAT63185.1"/>
    <property type="molecule type" value="Genomic_DNA"/>
</dbReference>
<dbReference type="RefSeq" id="WP_000862921.1">
    <property type="nucleotide sequence ID" value="NC_005957.1"/>
</dbReference>
<dbReference type="RefSeq" id="YP_035772.1">
    <property type="nucleotide sequence ID" value="NC_005957.1"/>
</dbReference>
<dbReference type="SMR" id="Q6HKZ9"/>
<dbReference type="KEGG" id="btk:BT9727_1438"/>
<dbReference type="PATRIC" id="fig|281309.8.peg.1512"/>
<dbReference type="HOGENOM" id="CLU_105319_0_0_9"/>
<dbReference type="Proteomes" id="UP000001301">
    <property type="component" value="Chromosome"/>
</dbReference>
<dbReference type="Gene3D" id="3.40.50.450">
    <property type="match status" value="1"/>
</dbReference>
<dbReference type="HAMAP" id="MF_01575">
    <property type="entry name" value="UPF0398"/>
    <property type="match status" value="1"/>
</dbReference>
<dbReference type="InterPro" id="IPR010697">
    <property type="entry name" value="YspA"/>
</dbReference>
<dbReference type="NCBIfam" id="NF010181">
    <property type="entry name" value="PRK13660.1"/>
    <property type="match status" value="1"/>
</dbReference>
<dbReference type="PANTHER" id="PTHR38440:SF1">
    <property type="entry name" value="UPF0398 PROTEIN SPR0331"/>
    <property type="match status" value="1"/>
</dbReference>
<dbReference type="PANTHER" id="PTHR38440">
    <property type="entry name" value="UPF0398 PROTEIN YPSA"/>
    <property type="match status" value="1"/>
</dbReference>
<dbReference type="Pfam" id="PF06908">
    <property type="entry name" value="YpsA"/>
    <property type="match status" value="1"/>
</dbReference>
<dbReference type="PIRSF" id="PIRSF021290">
    <property type="entry name" value="DUF1273"/>
    <property type="match status" value="1"/>
</dbReference>
<dbReference type="SUPFAM" id="SSF102405">
    <property type="entry name" value="MCP/YpsA-like"/>
    <property type="match status" value="1"/>
</dbReference>
<accession>Q6HKZ9</accession>
<gene>
    <name type="ordered locus">BT9727_1438</name>
</gene>
<name>Y1438_BACHK</name>
<protein>
    <recommendedName>
        <fullName evidence="1">UPF0398 protein BT9727_1438</fullName>
    </recommendedName>
</protein>
<sequence length="184" mass="21510">MKVIAVTGYKPFELGIFKNDHPGVECIKKALRRKLTAFVEDGLEWVIISGQLGVELWAAEVVFEIQVEYPDLKLAVFTPFLEQEEGWKEDNREYYEFILSQADHVDSITKRKYESPEQFKLKNQFFIEKSDALLAVYDEEKPGSPKYIVEAAKKKGEIENYHSYFILFSDLQDIIEEEQWNNAE</sequence>
<reference key="1">
    <citation type="journal article" date="2006" name="J. Bacteriol.">
        <title>Pathogenomic sequence analysis of Bacillus cereus and Bacillus thuringiensis isolates closely related to Bacillus anthracis.</title>
        <authorList>
            <person name="Han C.S."/>
            <person name="Xie G."/>
            <person name="Challacombe J.F."/>
            <person name="Altherr M.R."/>
            <person name="Bhotika S.S."/>
            <person name="Bruce D."/>
            <person name="Campbell C.S."/>
            <person name="Campbell M.L."/>
            <person name="Chen J."/>
            <person name="Chertkov O."/>
            <person name="Cleland C."/>
            <person name="Dimitrijevic M."/>
            <person name="Doggett N.A."/>
            <person name="Fawcett J.J."/>
            <person name="Glavina T."/>
            <person name="Goodwin L.A."/>
            <person name="Hill K.K."/>
            <person name="Hitchcock P."/>
            <person name="Jackson P.J."/>
            <person name="Keim P."/>
            <person name="Kewalramani A.R."/>
            <person name="Longmire J."/>
            <person name="Lucas S."/>
            <person name="Malfatti S."/>
            <person name="McMurry K."/>
            <person name="Meincke L.J."/>
            <person name="Misra M."/>
            <person name="Moseman B.L."/>
            <person name="Mundt M."/>
            <person name="Munk A.C."/>
            <person name="Okinaka R.T."/>
            <person name="Parson-Quintana B."/>
            <person name="Reilly L.P."/>
            <person name="Richardson P."/>
            <person name="Robinson D.L."/>
            <person name="Rubin E."/>
            <person name="Saunders E."/>
            <person name="Tapia R."/>
            <person name="Tesmer J.G."/>
            <person name="Thayer N."/>
            <person name="Thompson L.S."/>
            <person name="Tice H."/>
            <person name="Ticknor L.O."/>
            <person name="Wills P.L."/>
            <person name="Brettin T.S."/>
            <person name="Gilna P."/>
        </authorList>
    </citation>
    <scope>NUCLEOTIDE SEQUENCE [LARGE SCALE GENOMIC DNA]</scope>
    <source>
        <strain>97-27</strain>
    </source>
</reference>